<sequence length="731" mass="78820">MSSSLIFKLFFFSLFFSNRLASRLDSDDDGKNIYIVYMGRKLEDPDSAHLHHRAMLEQVVGSTFAPESVLHTYKRSFNGFAVKLTEEEAEKIASMEGVVSVFLNEMNELHTTRSWDFLGFPLTVPRRSQVESNIVVGVLDTGIWPESPSFDDEGFSPPPPKWKGTCETSNNFRCNRKIIGARSYHIGRPISPGDVNGPRDTNGHGTHTASTAAGGLVSQANLYGLGLGTARGGVPLARIAAYKVCWNDGCSDTDILAAYDDAIADGVDIISLSVGGANPRHYFVDAIAIGSFHAVERGILTSNSAGNGGPNFFTTASLSPWLLSVAASTMDRKFVTQVQIGNGQSFQGVSINTFDNQYYPLVSGRDIPNTGFDKSTSRFCTDKSVNPNLLKGKIVVCEASFGPHEFFKSLDGAAGVLMTSNTRDYADSYPLPSSVLDPNDLLATLRYIYSIRSPGATIFKSTTILNASAPVVVSFSSRGPNRATKDVIKPDISGPGVEILAAWPSVAPVGGIRRNTLFNIISGTSMSCPHITGIATYVKTYNPTWSPAAIKSALMTTASPMNARFNPQAEFAYGSGHVNPLKAVRPGLVYDANESDYVKFLCGQGYNTQAVRRITGDYSACTSGNTGRVWDLNYPSFGLSVSPSQTFNQYFNRTLTSVAPQASTYRAMISAPQGLTISVNPNVLSFNGLGDRKSFTLTVRGSIKGFVVSASLVWSDGVHYVRSPITITSLV</sequence>
<keyword id="KW-0002">3D-structure</keyword>
<keyword id="KW-0020">Allergen</keyword>
<keyword id="KW-0068">Autocatalytic cleavage</keyword>
<keyword id="KW-0903">Direct protein sequencing</keyword>
<keyword id="KW-1015">Disulfide bond</keyword>
<keyword id="KW-0325">Glycoprotein</keyword>
<keyword id="KW-0378">Hydrolase</keyword>
<keyword id="KW-0645">Protease</keyword>
<keyword id="KW-1185">Reference proteome</keyword>
<keyword id="KW-0964">Secreted</keyword>
<keyword id="KW-0720">Serine protease</keyword>
<keyword id="KW-0732">Signal</keyword>
<keyword id="KW-0865">Zymogen</keyword>
<name>CUCM1_CUCME</name>
<evidence type="ECO:0000255" key="1"/>
<evidence type="ECO:0000255" key="2">
    <source>
        <dbReference type="PROSITE-ProRule" id="PRU01240"/>
    </source>
</evidence>
<evidence type="ECO:0000269" key="3">
    <source>
    </source>
</evidence>
<evidence type="ECO:0000269" key="4">
    <source>
    </source>
</evidence>
<evidence type="ECO:0000269" key="5">
    <source>
    </source>
</evidence>
<evidence type="ECO:0000269" key="6">
    <source>
    </source>
</evidence>
<evidence type="ECO:0000269" key="7">
    <source ref="4"/>
</evidence>
<evidence type="ECO:0000269" key="8">
    <source ref="6"/>
</evidence>
<evidence type="ECO:0000303" key="9">
    <source>
    </source>
</evidence>
<evidence type="ECO:0000303" key="10">
    <source>
    </source>
</evidence>
<evidence type="ECO:0000305" key="11"/>
<evidence type="ECO:0000305" key="12">
    <source>
    </source>
</evidence>
<evidence type="ECO:0000305" key="13">
    <source ref="6"/>
</evidence>
<evidence type="ECO:0007744" key="14">
    <source>
        <dbReference type="PDB" id="3VTA"/>
    </source>
</evidence>
<evidence type="ECO:0007744" key="15">
    <source>
        <dbReference type="PDB" id="4YN3"/>
    </source>
</evidence>
<evidence type="ECO:0007829" key="16">
    <source>
        <dbReference type="PDB" id="3VTA"/>
    </source>
</evidence>
<evidence type="ECO:0007829" key="17">
    <source>
        <dbReference type="PDB" id="4YN3"/>
    </source>
</evidence>
<comment type="catalytic activity">
    <reaction evidence="12">
        <text>Hydrolysis of proteins with broad specificity.</text>
        <dbReference type="EC" id="3.4.21.25"/>
    </reaction>
</comment>
<comment type="biophysicochemical properties">
    <temperatureDependence>
        <text evidence="8">Melting point at 81 degrees Celsius.</text>
    </temperatureDependence>
</comment>
<comment type="subunit">
    <text evidence="8">Monomer and dimer.</text>
</comment>
<comment type="subcellular location">
    <subcellularLocation>
        <location evidence="1">Secreted</location>
    </subcellularLocation>
</comment>
<comment type="tissue specificity">
    <text evidence="3 6">Specifically expressed in fruits. Expressed in sarcocarp (at protein level).</text>
</comment>
<comment type="PTM">
    <text evidence="6">The C-terminal propeptide is autocleaved.</text>
</comment>
<comment type="allergen">
    <text evidence="4">Causes an allergic reaction in human. Binds to IgE.</text>
</comment>
<comment type="similarity">
    <text evidence="11">Belongs to the peptidase S8 family.</text>
</comment>
<feature type="signal peptide" evidence="1">
    <location>
        <begin position="1"/>
        <end position="22"/>
    </location>
</feature>
<feature type="propeptide" id="PRO_0000027003" description="Activation peptide">
    <location>
        <begin position="23"/>
        <end position="110"/>
    </location>
</feature>
<feature type="chain" id="PRO_0000027004" description="Cucumisin">
    <location>
        <begin position="111"/>
        <end position="615"/>
    </location>
</feature>
<feature type="propeptide" id="PRO_0000027005">
    <location>
        <begin position="616"/>
        <end position="731"/>
    </location>
</feature>
<feature type="domain" description="Inhibitor I9" evidence="1">
    <location>
        <begin position="34"/>
        <end position="110"/>
    </location>
</feature>
<feature type="domain" description="Peptidase S8" evidence="2">
    <location>
        <begin position="114"/>
        <end position="584"/>
    </location>
</feature>
<feature type="active site" description="Charge relay system" evidence="2 13">
    <location>
        <position position="140"/>
    </location>
</feature>
<feature type="active site" description="Charge relay system" evidence="2 13">
    <location>
        <position position="204"/>
    </location>
</feature>
<feature type="active site" description="Charge relay system" evidence="2 13">
    <location>
        <position position="525"/>
    </location>
</feature>
<feature type="glycosylation site" description="N-linked (GlcNAc...) asparagine" evidence="5 7 8 14 15">
    <location>
        <position position="466"/>
    </location>
</feature>
<feature type="glycosylation site" description="N-linked (GlcNAc...) asparagine" evidence="5 7 8 14 15">
    <location>
        <position position="652"/>
    </location>
</feature>
<feature type="disulfide bond" evidence="5 8 14 15">
    <location>
        <begin position="166"/>
        <end position="174"/>
    </location>
</feature>
<feature type="disulfide bond" evidence="5 8 14 15">
    <location>
        <begin position="245"/>
        <end position="250"/>
    </location>
</feature>
<feature type="disulfide bond" evidence="5 8 14 15">
    <location>
        <begin position="380"/>
        <end position="397"/>
    </location>
</feature>
<feature type="sequence conflict" description="In Ref. 1; AA sequence." evidence="11" ref="1">
    <original>L</original>
    <variation>K</variation>
    <location>
        <position position="118"/>
    </location>
</feature>
<feature type="strand" evidence="17">
    <location>
        <begin position="32"/>
        <end position="40"/>
    </location>
</feature>
<feature type="helix" evidence="17">
    <location>
        <begin position="66"/>
        <end position="68"/>
    </location>
</feature>
<feature type="strand" evidence="17">
    <location>
        <begin position="69"/>
        <end position="73"/>
    </location>
</feature>
<feature type="strand" evidence="17">
    <location>
        <begin position="75"/>
        <end position="84"/>
    </location>
</feature>
<feature type="helix" evidence="17">
    <location>
        <begin position="86"/>
        <end position="94"/>
    </location>
</feature>
<feature type="strand" evidence="17">
    <location>
        <begin position="95"/>
        <end position="97"/>
    </location>
</feature>
<feature type="strand" evidence="17">
    <location>
        <begin position="100"/>
        <end position="103"/>
    </location>
</feature>
<feature type="strand" evidence="17">
    <location>
        <begin position="106"/>
        <end position="109"/>
    </location>
</feature>
<feature type="helix" evidence="17">
    <location>
        <begin position="114"/>
        <end position="117"/>
    </location>
</feature>
<feature type="helix" evidence="17">
    <location>
        <begin position="128"/>
        <end position="131"/>
    </location>
</feature>
<feature type="strand" evidence="17">
    <location>
        <begin position="135"/>
        <end position="141"/>
    </location>
</feature>
<feature type="helix" evidence="17">
    <location>
        <begin position="148"/>
        <end position="150"/>
    </location>
</feature>
<feature type="turn" evidence="17">
    <location>
        <begin position="169"/>
        <end position="171"/>
    </location>
</feature>
<feature type="strand" evidence="17">
    <location>
        <begin position="176"/>
        <end position="183"/>
    </location>
</feature>
<feature type="strand" evidence="16">
    <location>
        <begin position="187"/>
        <end position="189"/>
    </location>
</feature>
<feature type="strand" evidence="17">
    <location>
        <begin position="196"/>
        <end position="199"/>
    </location>
</feature>
<feature type="strand" evidence="17">
    <location>
        <begin position="201"/>
        <end position="203"/>
    </location>
</feature>
<feature type="helix" evidence="17">
    <location>
        <begin position="204"/>
        <end position="213"/>
    </location>
</feature>
<feature type="strand" evidence="17">
    <location>
        <begin position="217"/>
        <end position="222"/>
    </location>
</feature>
<feature type="strand" evidence="17">
    <location>
        <begin position="225"/>
        <end position="230"/>
    </location>
</feature>
<feature type="strand" evidence="17">
    <location>
        <begin position="237"/>
        <end position="243"/>
    </location>
</feature>
<feature type="strand" evidence="17">
    <location>
        <begin position="249"/>
        <end position="251"/>
    </location>
</feature>
<feature type="helix" evidence="17">
    <location>
        <begin position="252"/>
        <end position="265"/>
    </location>
</feature>
<feature type="strand" evidence="17">
    <location>
        <begin position="268"/>
        <end position="272"/>
    </location>
</feature>
<feature type="helix" evidence="17">
    <location>
        <begin position="282"/>
        <end position="284"/>
    </location>
</feature>
<feature type="helix" evidence="17">
    <location>
        <begin position="286"/>
        <end position="295"/>
    </location>
</feature>
<feature type="turn" evidence="17">
    <location>
        <begin position="296"/>
        <end position="298"/>
    </location>
</feature>
<feature type="strand" evidence="17">
    <location>
        <begin position="300"/>
        <end position="304"/>
    </location>
</feature>
<feature type="strand" evidence="17">
    <location>
        <begin position="310"/>
        <end position="313"/>
    </location>
</feature>
<feature type="strand" evidence="17">
    <location>
        <begin position="322"/>
        <end position="328"/>
    </location>
</feature>
<feature type="strand" evidence="17">
    <location>
        <begin position="331"/>
        <end position="340"/>
    </location>
</feature>
<feature type="strand" evidence="17">
    <location>
        <begin position="345"/>
        <end position="349"/>
    </location>
</feature>
<feature type="strand" evidence="17">
    <location>
        <begin position="357"/>
        <end position="363"/>
    </location>
</feature>
<feature type="helix" evidence="17">
    <location>
        <begin position="364"/>
        <end position="366"/>
    </location>
</feature>
<feature type="helix" evidence="17">
    <location>
        <begin position="374"/>
        <end position="377"/>
    </location>
</feature>
<feature type="turn" evidence="16">
    <location>
        <begin position="378"/>
        <end position="380"/>
    </location>
</feature>
<feature type="turn" evidence="17">
    <location>
        <begin position="387"/>
        <end position="389"/>
    </location>
</feature>
<feature type="turn" evidence="16">
    <location>
        <begin position="390"/>
        <end position="392"/>
    </location>
</feature>
<feature type="strand" evidence="17">
    <location>
        <begin position="393"/>
        <end position="396"/>
    </location>
</feature>
<feature type="helix" evidence="17">
    <location>
        <begin position="403"/>
        <end position="409"/>
    </location>
</feature>
<feature type="strand" evidence="17">
    <location>
        <begin position="414"/>
        <end position="419"/>
    </location>
</feature>
<feature type="strand" evidence="17">
    <location>
        <begin position="430"/>
        <end position="436"/>
    </location>
</feature>
<feature type="helix" evidence="17">
    <location>
        <begin position="438"/>
        <end position="448"/>
    </location>
</feature>
<feature type="strand" evidence="17">
    <location>
        <begin position="451"/>
        <end position="453"/>
    </location>
</feature>
<feature type="strand" evidence="17">
    <location>
        <begin position="455"/>
        <end position="458"/>
    </location>
</feature>
<feature type="strand" evidence="17">
    <location>
        <begin position="462"/>
        <end position="465"/>
    </location>
</feature>
<feature type="strand" evidence="17">
    <location>
        <begin position="482"/>
        <end position="484"/>
    </location>
</feature>
<feature type="strand" evidence="17">
    <location>
        <begin position="492"/>
        <end position="495"/>
    </location>
</feature>
<feature type="strand" evidence="17">
    <location>
        <begin position="497"/>
        <end position="502"/>
    </location>
</feature>
<feature type="strand" evidence="16">
    <location>
        <begin position="505"/>
        <end position="507"/>
    </location>
</feature>
<feature type="strand" evidence="17">
    <location>
        <begin position="517"/>
        <end position="521"/>
    </location>
</feature>
<feature type="helix" evidence="17">
    <location>
        <begin position="524"/>
        <end position="541"/>
    </location>
</feature>
<feature type="helix" evidence="17">
    <location>
        <begin position="547"/>
        <end position="556"/>
    </location>
</feature>
<feature type="turn" evidence="17">
    <location>
        <begin position="563"/>
        <end position="565"/>
    </location>
</feature>
<feature type="turn" evidence="17">
    <location>
        <begin position="567"/>
        <end position="569"/>
    </location>
</feature>
<feature type="helix" evidence="17">
    <location>
        <begin position="570"/>
        <end position="573"/>
    </location>
</feature>
<feature type="helix" evidence="17">
    <location>
        <begin position="580"/>
        <end position="583"/>
    </location>
</feature>
<feature type="strand" evidence="17">
    <location>
        <begin position="587"/>
        <end position="589"/>
    </location>
</feature>
<feature type="helix" evidence="17">
    <location>
        <begin position="594"/>
        <end position="597"/>
    </location>
</feature>
<feature type="helix" evidence="16">
    <location>
        <begin position="629"/>
        <end position="631"/>
    </location>
</feature>
<feature type="strand" evidence="17">
    <location>
        <begin position="635"/>
        <end position="640"/>
    </location>
</feature>
<feature type="strand" evidence="17">
    <location>
        <begin position="647"/>
        <end position="657"/>
    </location>
</feature>
<feature type="strand" evidence="17">
    <location>
        <begin position="659"/>
        <end position="661"/>
    </location>
</feature>
<feature type="strand" evidence="17">
    <location>
        <begin position="663"/>
        <end position="670"/>
    </location>
</feature>
<feature type="strand" evidence="17">
    <location>
        <begin position="675"/>
        <end position="686"/>
    </location>
</feature>
<feature type="strand" evidence="17">
    <location>
        <begin position="692"/>
        <end position="701"/>
    </location>
</feature>
<feature type="strand" evidence="17">
    <location>
        <begin position="704"/>
        <end position="718"/>
    </location>
</feature>
<feature type="strand" evidence="17">
    <location>
        <begin position="720"/>
        <end position="728"/>
    </location>
</feature>
<proteinExistence type="evidence at protein level"/>
<organism>
    <name type="scientific">Cucumis melo</name>
    <name type="common">Muskmelon</name>
    <dbReference type="NCBI Taxonomy" id="3656"/>
    <lineage>
        <taxon>Eukaryota</taxon>
        <taxon>Viridiplantae</taxon>
        <taxon>Streptophyta</taxon>
        <taxon>Embryophyta</taxon>
        <taxon>Tracheophyta</taxon>
        <taxon>Spermatophyta</taxon>
        <taxon>Magnoliopsida</taxon>
        <taxon>eudicotyledons</taxon>
        <taxon>Gunneridae</taxon>
        <taxon>Pentapetalae</taxon>
        <taxon>rosids</taxon>
        <taxon>fabids</taxon>
        <taxon>Cucurbitales</taxon>
        <taxon>Cucurbitaceae</taxon>
        <taxon>Benincaseae</taxon>
        <taxon>Cucumis</taxon>
    </lineage>
</organism>
<protein>
    <recommendedName>
        <fullName evidence="10">Cucumisin</fullName>
        <ecNumber evidence="12">3.4.21.25</ecNumber>
    </recommendedName>
    <allergenName evidence="9">Cuc m 1</allergenName>
</protein>
<dbReference type="EC" id="3.4.21.25" evidence="12"/>
<dbReference type="EMBL" id="D32206">
    <property type="protein sequence ID" value="BAA06905.1"/>
    <property type="molecule type" value="mRNA"/>
</dbReference>
<dbReference type="EMBL" id="AY055805">
    <property type="protein sequence ID" value="AAL25196.1"/>
    <property type="molecule type" value="Genomic_DNA"/>
</dbReference>
<dbReference type="PIR" id="A55800">
    <property type="entry name" value="A55800"/>
</dbReference>
<dbReference type="RefSeq" id="NP_001412405.1">
    <property type="nucleotide sequence ID" value="NM_001425476.1"/>
</dbReference>
<dbReference type="PDB" id="3VTA">
    <property type="method" value="X-ray"/>
    <property type="resolution" value="2.75 A"/>
    <property type="chains" value="A/B=111-731"/>
</dbReference>
<dbReference type="PDB" id="4YN3">
    <property type="method" value="X-ray"/>
    <property type="resolution" value="1.95 A"/>
    <property type="chains" value="A=111-731, B=23-110"/>
</dbReference>
<dbReference type="PDBsum" id="3VTA"/>
<dbReference type="PDBsum" id="4YN3"/>
<dbReference type="SMR" id="Q39547"/>
<dbReference type="Allergome" id="255">
    <property type="allergen name" value="Cuc m 1"/>
</dbReference>
<dbReference type="Allergome" id="3229">
    <property type="allergen name" value="Cuc m 1.0101"/>
</dbReference>
<dbReference type="MEROPS" id="S08.092"/>
<dbReference type="iPTMnet" id="Q39547"/>
<dbReference type="GeneID" id="103500253"/>
<dbReference type="eggNOG" id="ENOG502QRA7">
    <property type="taxonomic scope" value="Eukaryota"/>
</dbReference>
<dbReference type="InParanoid" id="Q39547"/>
<dbReference type="BRENDA" id="3.4.21.25">
    <property type="organism ID" value="1735"/>
</dbReference>
<dbReference type="EvolutionaryTrace" id="Q39547"/>
<dbReference type="Proteomes" id="UP000089565">
    <property type="component" value="Unplaced"/>
</dbReference>
<dbReference type="Proteomes" id="UP000596662">
    <property type="component" value="Unplaced"/>
</dbReference>
<dbReference type="GO" id="GO:0005576">
    <property type="term" value="C:extracellular region"/>
    <property type="evidence" value="ECO:0007669"/>
    <property type="project" value="UniProtKB-SubCell"/>
</dbReference>
<dbReference type="GO" id="GO:0004252">
    <property type="term" value="F:serine-type endopeptidase activity"/>
    <property type="evidence" value="ECO:0007669"/>
    <property type="project" value="InterPro"/>
</dbReference>
<dbReference type="GO" id="GO:0006508">
    <property type="term" value="P:proteolysis"/>
    <property type="evidence" value="ECO:0007669"/>
    <property type="project" value="UniProtKB-KW"/>
</dbReference>
<dbReference type="CDD" id="cd02120">
    <property type="entry name" value="PA_subtilisin_like"/>
    <property type="match status" value="1"/>
</dbReference>
<dbReference type="CDD" id="cd04852">
    <property type="entry name" value="Peptidases_S8_3"/>
    <property type="match status" value="1"/>
</dbReference>
<dbReference type="FunFam" id="3.40.50.200:FF:000006">
    <property type="entry name" value="Subtilisin-like protease SBT1.5"/>
    <property type="match status" value="1"/>
</dbReference>
<dbReference type="FunFam" id="3.30.70.80:FF:000002">
    <property type="entry name" value="Subtilisin-like protease SBT5.3"/>
    <property type="match status" value="1"/>
</dbReference>
<dbReference type="Gene3D" id="2.60.40.2310">
    <property type="match status" value="1"/>
</dbReference>
<dbReference type="Gene3D" id="3.50.30.30">
    <property type="match status" value="1"/>
</dbReference>
<dbReference type="Gene3D" id="3.30.70.80">
    <property type="entry name" value="Peptidase S8 propeptide/proteinase inhibitor I9"/>
    <property type="match status" value="1"/>
</dbReference>
<dbReference type="Gene3D" id="3.40.50.200">
    <property type="entry name" value="Peptidase S8/S53 domain"/>
    <property type="match status" value="1"/>
</dbReference>
<dbReference type="InterPro" id="IPR000209">
    <property type="entry name" value="Peptidase_S8/S53_dom"/>
</dbReference>
<dbReference type="InterPro" id="IPR036852">
    <property type="entry name" value="Peptidase_S8/S53_dom_sf"/>
</dbReference>
<dbReference type="InterPro" id="IPR023828">
    <property type="entry name" value="Peptidase_S8_Ser-AS"/>
</dbReference>
<dbReference type="InterPro" id="IPR015500">
    <property type="entry name" value="Peptidase_S8_subtilisin-rel"/>
</dbReference>
<dbReference type="InterPro" id="IPR034197">
    <property type="entry name" value="Peptidases_S8_3"/>
</dbReference>
<dbReference type="InterPro" id="IPR010259">
    <property type="entry name" value="S8pro/Inhibitor_I9"/>
</dbReference>
<dbReference type="InterPro" id="IPR037045">
    <property type="entry name" value="S8pro/Inhibitor_I9_sf"/>
</dbReference>
<dbReference type="InterPro" id="IPR045051">
    <property type="entry name" value="SBT"/>
</dbReference>
<dbReference type="InterPro" id="IPR041469">
    <property type="entry name" value="Subtilisin-like_FN3"/>
</dbReference>
<dbReference type="PANTHER" id="PTHR10795">
    <property type="entry name" value="PROPROTEIN CONVERTASE SUBTILISIN/KEXIN"/>
    <property type="match status" value="1"/>
</dbReference>
<dbReference type="Pfam" id="PF17766">
    <property type="entry name" value="fn3_6"/>
    <property type="match status" value="1"/>
</dbReference>
<dbReference type="Pfam" id="PF05922">
    <property type="entry name" value="Inhibitor_I9"/>
    <property type="match status" value="1"/>
</dbReference>
<dbReference type="Pfam" id="PF00082">
    <property type="entry name" value="Peptidase_S8"/>
    <property type="match status" value="1"/>
</dbReference>
<dbReference type="PRINTS" id="PR00723">
    <property type="entry name" value="SUBTILISIN"/>
</dbReference>
<dbReference type="SUPFAM" id="SSF52743">
    <property type="entry name" value="Subtilisin-like"/>
    <property type="match status" value="1"/>
</dbReference>
<dbReference type="PROSITE" id="PS51892">
    <property type="entry name" value="SUBTILASE"/>
    <property type="match status" value="1"/>
</dbReference>
<dbReference type="PROSITE" id="PS00138">
    <property type="entry name" value="SUBTILASE_SER"/>
    <property type="match status" value="1"/>
</dbReference>
<reference key="1">
    <citation type="journal article" date="1994" name="J. Biol. Chem.">
        <title>Cucumisin, a serine protease from melon fruits, shares structural homology with subtilisin and is generated from a large precursor.</title>
        <authorList>
            <person name="Yamagata H."/>
            <person name="Masuzawa T."/>
            <person name="Nagaoka Y."/>
            <person name="Ohnishi T."/>
            <person name="Iwasaki T."/>
        </authorList>
    </citation>
    <scope>NUCLEOTIDE SEQUENCE [MRNA]</scope>
    <scope>PROTEIN SEQUENCE OF 111-123 AND 616-622</scope>
    <scope>TISSUE SPECIFICITY</scope>
    <scope>PROTEOLYTIC PROCESSING</scope>
    <source>
        <strain>cv. Reticulatus / Teresa</strain>
        <tissue>Fruit</tissue>
    </source>
</reference>
<reference key="2">
    <citation type="journal article" date="2002" name="J. Biol. Chem.">
        <title>TGTCACA motif is a novel cis-regulatory enhancer element involved in fruit-specific expression of the cucumisin gene.</title>
        <authorList>
            <person name="Yamagata H."/>
            <person name="Yonesu K."/>
            <person name="Hirata A."/>
            <person name="Aizono Y."/>
        </authorList>
    </citation>
    <scope>NUCLEOTIDE SEQUENCE [GENOMIC DNA] OF 1-181</scope>
    <scope>TISSUE SPECIFICITY</scope>
    <source>
        <strain>cv. Reticulatus / Teresa</strain>
        <tissue>Fruit</tissue>
    </source>
</reference>
<reference key="3">
    <citation type="journal article" date="2003" name="Clin. Exp. Allergy">
        <title>Identification of Cucumisin (Cuc m 1), a subtilisin-like endopeptidase, as the major allergen of melon fruit.</title>
        <authorList>
            <person name="Cuesta-Herranz J."/>
            <person name="Pastor C."/>
            <person name="Figueredo E."/>
            <person name="Vidarte L."/>
            <person name="De las Heras M."/>
            <person name="Duran C."/>
            <person name="Fernandez-Caldas E."/>
            <person name="de Miguel J."/>
            <person name="Vivanco F."/>
        </authorList>
    </citation>
    <scope>PROTEIN SEQUENCE OF 111-118</scope>
    <scope>ALLERGEN</scope>
</reference>
<reference key="4">
    <citation type="journal article" date="1986" name="Agric. Biol. Chem.">
        <title>Amino acid sequences of glycopeptides from Cucumisin.</title>
        <authorList>
            <person name="Kaneda M."/>
            <person name="Kamikubo Y."/>
            <person name="Tominaga N."/>
        </authorList>
        <dbReference type="AGRICOLA" id="IND87003744"/>
    </citation>
    <scope>PROTEIN SEQUENCE OF 466-468 AND 652-654</scope>
    <scope>GLYCOSYLATION AT ASN-466 AND ASN-652</scope>
</reference>
<reference key="5">
    <citation type="journal article" date="2012" name="J. Mol. Biol.">
        <title>Crystal structure of cucumisin, a subtilisin-like endoprotease from Cucumis melo L.</title>
        <authorList>
            <person name="Murayama K."/>
            <person name="Kato-Murayama M."/>
            <person name="Hosaka T."/>
            <person name="Sotokawauchi A."/>
            <person name="Yokoyama S."/>
            <person name="Arima K."/>
            <person name="Shirouzu M."/>
        </authorList>
    </citation>
    <scope>X-RAY CRYSTALLOGRAPHY (2.75 ANGSTROMS) OF 111-731</scope>
    <scope>GLYCOSYLATION AT ASN-466 AND ASN-652</scope>
    <scope>DISULFIDE BONDS</scope>
    <scope>ACTIVE SITE</scope>
    <scope>SUBUNIT</scope>
    <scope>BIOPHYSICOCHEMICAL PROPERTIES</scope>
    <source>
        <strain>cv. Prince</strain>
    </source>
</reference>
<reference key="6">
    <citation type="submission" date="2015-03" db="PDB data bank">
        <title>Crystal structure of Cucumisin complexed with pro-peptide.</title>
        <authorList>
            <person name="Murayama K."/>
            <person name="Kato-Murayama M."/>
            <person name="Yokoyama S."/>
            <person name="Arima K."/>
            <person name="Shirouzu M."/>
        </authorList>
    </citation>
    <scope>X-RAY CRYSTALLOGRAPHY (1.95 ANGSTROMS) OF 111-731 AND 23-110</scope>
    <scope>GLYCOSYLATION AT ASN-466 AND ASN-652</scope>
    <scope>DISULFIDE BONDS</scope>
</reference>
<accession>Q39547</accession>
<accession>Q940D5</accession>